<proteinExistence type="inferred from homology"/>
<protein>
    <recommendedName>
        <fullName evidence="1">Small ribosomal subunit protein uS5</fullName>
    </recommendedName>
    <alternativeName>
        <fullName evidence="2">30S ribosomal protein S5</fullName>
    </alternativeName>
</protein>
<accession>B1JAJ5</accession>
<name>RS5_PSEPW</name>
<dbReference type="EMBL" id="CP000949">
    <property type="protein sequence ID" value="ACA75208.1"/>
    <property type="molecule type" value="Genomic_DNA"/>
</dbReference>
<dbReference type="SMR" id="B1JAJ5"/>
<dbReference type="STRING" id="390235.PputW619_4732"/>
<dbReference type="KEGG" id="ppw:PputW619_4732"/>
<dbReference type="eggNOG" id="COG0098">
    <property type="taxonomic scope" value="Bacteria"/>
</dbReference>
<dbReference type="HOGENOM" id="CLU_065898_2_2_6"/>
<dbReference type="OrthoDB" id="9809045at2"/>
<dbReference type="GO" id="GO:0015935">
    <property type="term" value="C:small ribosomal subunit"/>
    <property type="evidence" value="ECO:0007669"/>
    <property type="project" value="InterPro"/>
</dbReference>
<dbReference type="GO" id="GO:0019843">
    <property type="term" value="F:rRNA binding"/>
    <property type="evidence" value="ECO:0007669"/>
    <property type="project" value="UniProtKB-UniRule"/>
</dbReference>
<dbReference type="GO" id="GO:0003735">
    <property type="term" value="F:structural constituent of ribosome"/>
    <property type="evidence" value="ECO:0007669"/>
    <property type="project" value="InterPro"/>
</dbReference>
<dbReference type="GO" id="GO:0006412">
    <property type="term" value="P:translation"/>
    <property type="evidence" value="ECO:0007669"/>
    <property type="project" value="UniProtKB-UniRule"/>
</dbReference>
<dbReference type="FunFam" id="3.30.160.20:FF:000001">
    <property type="entry name" value="30S ribosomal protein S5"/>
    <property type="match status" value="1"/>
</dbReference>
<dbReference type="FunFam" id="3.30.230.10:FF:000002">
    <property type="entry name" value="30S ribosomal protein S5"/>
    <property type="match status" value="1"/>
</dbReference>
<dbReference type="Gene3D" id="3.30.160.20">
    <property type="match status" value="1"/>
</dbReference>
<dbReference type="Gene3D" id="3.30.230.10">
    <property type="match status" value="1"/>
</dbReference>
<dbReference type="HAMAP" id="MF_01307_B">
    <property type="entry name" value="Ribosomal_uS5_B"/>
    <property type="match status" value="1"/>
</dbReference>
<dbReference type="InterPro" id="IPR020568">
    <property type="entry name" value="Ribosomal_Su5_D2-typ_SF"/>
</dbReference>
<dbReference type="InterPro" id="IPR000851">
    <property type="entry name" value="Ribosomal_uS5"/>
</dbReference>
<dbReference type="InterPro" id="IPR005712">
    <property type="entry name" value="Ribosomal_uS5_bac-type"/>
</dbReference>
<dbReference type="InterPro" id="IPR005324">
    <property type="entry name" value="Ribosomal_uS5_C"/>
</dbReference>
<dbReference type="InterPro" id="IPR013810">
    <property type="entry name" value="Ribosomal_uS5_N"/>
</dbReference>
<dbReference type="InterPro" id="IPR018192">
    <property type="entry name" value="Ribosomal_uS5_N_CS"/>
</dbReference>
<dbReference type="InterPro" id="IPR014721">
    <property type="entry name" value="Ribsml_uS5_D2-typ_fold_subgr"/>
</dbReference>
<dbReference type="NCBIfam" id="TIGR01021">
    <property type="entry name" value="rpsE_bact"/>
    <property type="match status" value="1"/>
</dbReference>
<dbReference type="PANTHER" id="PTHR48432">
    <property type="entry name" value="S5 DRBM DOMAIN-CONTAINING PROTEIN"/>
    <property type="match status" value="1"/>
</dbReference>
<dbReference type="PANTHER" id="PTHR48432:SF1">
    <property type="entry name" value="S5 DRBM DOMAIN-CONTAINING PROTEIN"/>
    <property type="match status" value="1"/>
</dbReference>
<dbReference type="Pfam" id="PF00333">
    <property type="entry name" value="Ribosomal_S5"/>
    <property type="match status" value="1"/>
</dbReference>
<dbReference type="Pfam" id="PF03719">
    <property type="entry name" value="Ribosomal_S5_C"/>
    <property type="match status" value="1"/>
</dbReference>
<dbReference type="SUPFAM" id="SSF54768">
    <property type="entry name" value="dsRNA-binding domain-like"/>
    <property type="match status" value="1"/>
</dbReference>
<dbReference type="SUPFAM" id="SSF54211">
    <property type="entry name" value="Ribosomal protein S5 domain 2-like"/>
    <property type="match status" value="1"/>
</dbReference>
<dbReference type="PROSITE" id="PS00585">
    <property type="entry name" value="RIBOSOMAL_S5"/>
    <property type="match status" value="1"/>
</dbReference>
<dbReference type="PROSITE" id="PS50881">
    <property type="entry name" value="S5_DSRBD"/>
    <property type="match status" value="1"/>
</dbReference>
<sequence length="166" mass="17666">MANNDQKRDEGYIEKLVQVNRVAKTVKGGRIFTFTALTVVGDGKGRVGFGRGKSREVPAAIQKAMEAARRNMIQVDLKGTTLQYATKAAHGASKVYMQPASEGTGIIAGGAMRAVLEVAGVQNVLAKCYGSTNPVNVVYATFKGLKAMQSPESIAAKRGKSVEEIF</sequence>
<gene>
    <name evidence="1" type="primary">rpsE</name>
    <name type="ordered locus">PputW619_4732</name>
</gene>
<evidence type="ECO:0000255" key="1">
    <source>
        <dbReference type="HAMAP-Rule" id="MF_01307"/>
    </source>
</evidence>
<evidence type="ECO:0000305" key="2"/>
<organism>
    <name type="scientific">Pseudomonas putida (strain W619)</name>
    <dbReference type="NCBI Taxonomy" id="390235"/>
    <lineage>
        <taxon>Bacteria</taxon>
        <taxon>Pseudomonadati</taxon>
        <taxon>Pseudomonadota</taxon>
        <taxon>Gammaproteobacteria</taxon>
        <taxon>Pseudomonadales</taxon>
        <taxon>Pseudomonadaceae</taxon>
        <taxon>Pseudomonas</taxon>
    </lineage>
</organism>
<feature type="chain" id="PRO_1000140885" description="Small ribosomal subunit protein uS5">
    <location>
        <begin position="1"/>
        <end position="166"/>
    </location>
</feature>
<feature type="domain" description="S5 DRBM" evidence="1">
    <location>
        <begin position="12"/>
        <end position="75"/>
    </location>
</feature>
<keyword id="KW-0687">Ribonucleoprotein</keyword>
<keyword id="KW-0689">Ribosomal protein</keyword>
<keyword id="KW-0694">RNA-binding</keyword>
<keyword id="KW-0699">rRNA-binding</keyword>
<comment type="function">
    <text evidence="1">With S4 and S12 plays an important role in translational accuracy.</text>
</comment>
<comment type="function">
    <text evidence="1">Located at the back of the 30S subunit body where it stabilizes the conformation of the head with respect to the body.</text>
</comment>
<comment type="subunit">
    <text evidence="1">Part of the 30S ribosomal subunit. Contacts proteins S4 and S8.</text>
</comment>
<comment type="domain">
    <text>The N-terminal domain interacts with the head of the 30S subunit; the C-terminal domain interacts with the body and contacts protein S4. The interaction surface between S4 and S5 is involved in control of translational fidelity.</text>
</comment>
<comment type="similarity">
    <text evidence="1">Belongs to the universal ribosomal protein uS5 family.</text>
</comment>
<reference key="1">
    <citation type="submission" date="2008-02" db="EMBL/GenBank/DDBJ databases">
        <title>Complete sequence of Pseudomonas putida W619.</title>
        <authorList>
            <person name="Copeland A."/>
            <person name="Lucas S."/>
            <person name="Lapidus A."/>
            <person name="Barry K."/>
            <person name="Detter J.C."/>
            <person name="Glavina del Rio T."/>
            <person name="Dalin E."/>
            <person name="Tice H."/>
            <person name="Pitluck S."/>
            <person name="Chain P."/>
            <person name="Malfatti S."/>
            <person name="Shin M."/>
            <person name="Vergez L."/>
            <person name="Schmutz J."/>
            <person name="Larimer F."/>
            <person name="Land M."/>
            <person name="Hauser L."/>
            <person name="Kyrpides N."/>
            <person name="Kim E."/>
            <person name="Taghavi S."/>
            <person name="Vangronsveld D."/>
            <person name="van der Lelie D."/>
            <person name="Richardson P."/>
        </authorList>
    </citation>
    <scope>NUCLEOTIDE SEQUENCE [LARGE SCALE GENOMIC DNA]</scope>
    <source>
        <strain>W619</strain>
    </source>
</reference>